<proteinExistence type="inferred from homology"/>
<evidence type="ECO:0000255" key="1">
    <source>
        <dbReference type="HAMAP-Rule" id="MF_01865"/>
    </source>
</evidence>
<evidence type="ECO:0000255" key="2">
    <source>
        <dbReference type="PROSITE-ProRule" id="PRU01266"/>
    </source>
</evidence>
<protein>
    <recommendedName>
        <fullName evidence="1">Ribosomal protein uS12 methylthiotransferase RimO</fullName>
        <shortName evidence="1">uS12 MTTase</shortName>
        <shortName evidence="1">uS12 methylthiotransferase</shortName>
        <ecNumber evidence="1">2.8.4.4</ecNumber>
    </recommendedName>
    <alternativeName>
        <fullName evidence="1">Ribosomal protein uS12 (aspartate-C(3))-methylthiotransferase</fullName>
    </alternativeName>
    <alternativeName>
        <fullName evidence="1">Ribosome maturation factor RimO</fullName>
    </alternativeName>
</protein>
<feature type="chain" id="PRO_0000374924" description="Ribosomal protein uS12 methylthiotransferase RimO">
    <location>
        <begin position="1"/>
        <end position="434"/>
    </location>
</feature>
<feature type="domain" description="MTTase N-terminal" evidence="1">
    <location>
        <begin position="4"/>
        <end position="122"/>
    </location>
</feature>
<feature type="domain" description="Radical SAM core" evidence="2">
    <location>
        <begin position="132"/>
        <end position="363"/>
    </location>
</feature>
<feature type="domain" description="TRAM" evidence="1">
    <location>
        <begin position="366"/>
        <end position="434"/>
    </location>
</feature>
<feature type="binding site" evidence="1">
    <location>
        <position position="13"/>
    </location>
    <ligand>
        <name>[4Fe-4S] cluster</name>
        <dbReference type="ChEBI" id="CHEBI:49883"/>
        <label>1</label>
    </ligand>
</feature>
<feature type="binding site" evidence="1">
    <location>
        <position position="51"/>
    </location>
    <ligand>
        <name>[4Fe-4S] cluster</name>
        <dbReference type="ChEBI" id="CHEBI:49883"/>
        <label>1</label>
    </ligand>
</feature>
<feature type="binding site" evidence="1">
    <location>
        <position position="85"/>
    </location>
    <ligand>
        <name>[4Fe-4S] cluster</name>
        <dbReference type="ChEBI" id="CHEBI:49883"/>
        <label>1</label>
    </ligand>
</feature>
<feature type="binding site" evidence="1">
    <location>
        <position position="146"/>
    </location>
    <ligand>
        <name>[4Fe-4S] cluster</name>
        <dbReference type="ChEBI" id="CHEBI:49883"/>
        <label>2</label>
        <note>4Fe-4S-S-AdoMet</note>
    </ligand>
</feature>
<feature type="binding site" evidence="1">
    <location>
        <position position="150"/>
    </location>
    <ligand>
        <name>[4Fe-4S] cluster</name>
        <dbReference type="ChEBI" id="CHEBI:49883"/>
        <label>2</label>
        <note>4Fe-4S-S-AdoMet</note>
    </ligand>
</feature>
<feature type="binding site" evidence="1">
    <location>
        <position position="153"/>
    </location>
    <ligand>
        <name>[4Fe-4S] cluster</name>
        <dbReference type="ChEBI" id="CHEBI:49883"/>
        <label>2</label>
        <note>4Fe-4S-S-AdoMet</note>
    </ligand>
</feature>
<dbReference type="EC" id="2.8.4.4" evidence="1"/>
<dbReference type="EMBL" id="AP009380">
    <property type="protein sequence ID" value="BAG32782.1"/>
    <property type="molecule type" value="Genomic_DNA"/>
</dbReference>
<dbReference type="RefSeq" id="WP_012457376.1">
    <property type="nucleotide sequence ID" value="NC_010729.1"/>
</dbReference>
<dbReference type="SMR" id="B2RHD7"/>
<dbReference type="GeneID" id="29255512"/>
<dbReference type="KEGG" id="pgn:PGN_0263"/>
<dbReference type="eggNOG" id="COG0621">
    <property type="taxonomic scope" value="Bacteria"/>
</dbReference>
<dbReference type="HOGENOM" id="CLU_018697_0_1_10"/>
<dbReference type="OrthoDB" id="9805215at2"/>
<dbReference type="BioCyc" id="PGIN431947:G1G2V-291-MONOMER"/>
<dbReference type="Proteomes" id="UP000008842">
    <property type="component" value="Chromosome"/>
</dbReference>
<dbReference type="GO" id="GO:0005829">
    <property type="term" value="C:cytosol"/>
    <property type="evidence" value="ECO:0007669"/>
    <property type="project" value="TreeGrafter"/>
</dbReference>
<dbReference type="GO" id="GO:0051539">
    <property type="term" value="F:4 iron, 4 sulfur cluster binding"/>
    <property type="evidence" value="ECO:0007669"/>
    <property type="project" value="UniProtKB-UniRule"/>
</dbReference>
<dbReference type="GO" id="GO:0035599">
    <property type="term" value="F:aspartic acid methylthiotransferase activity"/>
    <property type="evidence" value="ECO:0007669"/>
    <property type="project" value="TreeGrafter"/>
</dbReference>
<dbReference type="GO" id="GO:0046872">
    <property type="term" value="F:metal ion binding"/>
    <property type="evidence" value="ECO:0007669"/>
    <property type="project" value="UniProtKB-KW"/>
</dbReference>
<dbReference type="GO" id="GO:0103039">
    <property type="term" value="F:protein methylthiotransferase activity"/>
    <property type="evidence" value="ECO:0007669"/>
    <property type="project" value="UniProtKB-EC"/>
</dbReference>
<dbReference type="GO" id="GO:0006400">
    <property type="term" value="P:tRNA modification"/>
    <property type="evidence" value="ECO:0007669"/>
    <property type="project" value="InterPro"/>
</dbReference>
<dbReference type="CDD" id="cd01335">
    <property type="entry name" value="Radical_SAM"/>
    <property type="match status" value="1"/>
</dbReference>
<dbReference type="FunFam" id="3.80.30.20:FF:000001">
    <property type="entry name" value="tRNA-2-methylthio-N(6)-dimethylallyladenosine synthase 2"/>
    <property type="match status" value="1"/>
</dbReference>
<dbReference type="Gene3D" id="3.40.50.12160">
    <property type="entry name" value="Methylthiotransferase, N-terminal domain"/>
    <property type="match status" value="1"/>
</dbReference>
<dbReference type="Gene3D" id="2.40.50.140">
    <property type="entry name" value="Nucleic acid-binding proteins"/>
    <property type="match status" value="1"/>
</dbReference>
<dbReference type="Gene3D" id="3.80.30.20">
    <property type="entry name" value="tm_1862 like domain"/>
    <property type="match status" value="1"/>
</dbReference>
<dbReference type="HAMAP" id="MF_01865">
    <property type="entry name" value="MTTase_RimO"/>
    <property type="match status" value="1"/>
</dbReference>
<dbReference type="InterPro" id="IPR006638">
    <property type="entry name" value="Elp3/MiaA/NifB-like_rSAM"/>
</dbReference>
<dbReference type="InterPro" id="IPR005839">
    <property type="entry name" value="Methylthiotransferase"/>
</dbReference>
<dbReference type="InterPro" id="IPR020612">
    <property type="entry name" value="Methylthiotransferase_CS"/>
</dbReference>
<dbReference type="InterPro" id="IPR013848">
    <property type="entry name" value="Methylthiotransferase_N"/>
</dbReference>
<dbReference type="InterPro" id="IPR038135">
    <property type="entry name" value="Methylthiotransferase_N_sf"/>
</dbReference>
<dbReference type="InterPro" id="IPR012340">
    <property type="entry name" value="NA-bd_OB-fold"/>
</dbReference>
<dbReference type="InterPro" id="IPR005840">
    <property type="entry name" value="Ribosomal_uS12_MeSTrfase_RimO"/>
</dbReference>
<dbReference type="InterPro" id="IPR007197">
    <property type="entry name" value="rSAM"/>
</dbReference>
<dbReference type="InterPro" id="IPR023404">
    <property type="entry name" value="rSAM_horseshoe"/>
</dbReference>
<dbReference type="InterPro" id="IPR002792">
    <property type="entry name" value="TRAM_dom"/>
</dbReference>
<dbReference type="NCBIfam" id="TIGR01125">
    <property type="entry name" value="30S ribosomal protein S12 methylthiotransferase RimO"/>
    <property type="match status" value="1"/>
</dbReference>
<dbReference type="NCBIfam" id="TIGR00089">
    <property type="entry name" value="MiaB/RimO family radical SAM methylthiotransferase"/>
    <property type="match status" value="1"/>
</dbReference>
<dbReference type="PANTHER" id="PTHR43837">
    <property type="entry name" value="RIBOSOMAL PROTEIN S12 METHYLTHIOTRANSFERASE RIMO"/>
    <property type="match status" value="1"/>
</dbReference>
<dbReference type="PANTHER" id="PTHR43837:SF1">
    <property type="entry name" value="RIBOSOMAL PROTEIN US12 METHYLTHIOTRANSFERASE RIMO"/>
    <property type="match status" value="1"/>
</dbReference>
<dbReference type="Pfam" id="PF04055">
    <property type="entry name" value="Radical_SAM"/>
    <property type="match status" value="1"/>
</dbReference>
<dbReference type="Pfam" id="PF18693">
    <property type="entry name" value="TRAM_2"/>
    <property type="match status" value="1"/>
</dbReference>
<dbReference type="Pfam" id="PF00919">
    <property type="entry name" value="UPF0004"/>
    <property type="match status" value="1"/>
</dbReference>
<dbReference type="SFLD" id="SFLDG01082">
    <property type="entry name" value="B12-binding_domain_containing"/>
    <property type="match status" value="1"/>
</dbReference>
<dbReference type="SFLD" id="SFLDG01061">
    <property type="entry name" value="methylthiotransferase"/>
    <property type="match status" value="1"/>
</dbReference>
<dbReference type="SFLD" id="SFLDF00274">
    <property type="entry name" value="ribosomal_protein_S12_methylth"/>
    <property type="match status" value="1"/>
</dbReference>
<dbReference type="SMART" id="SM00729">
    <property type="entry name" value="Elp3"/>
    <property type="match status" value="1"/>
</dbReference>
<dbReference type="SUPFAM" id="SSF102114">
    <property type="entry name" value="Radical SAM enzymes"/>
    <property type="match status" value="1"/>
</dbReference>
<dbReference type="PROSITE" id="PS51449">
    <property type="entry name" value="MTTASE_N"/>
    <property type="match status" value="1"/>
</dbReference>
<dbReference type="PROSITE" id="PS01278">
    <property type="entry name" value="MTTASE_RADICAL"/>
    <property type="match status" value="1"/>
</dbReference>
<dbReference type="PROSITE" id="PS51918">
    <property type="entry name" value="RADICAL_SAM"/>
    <property type="match status" value="1"/>
</dbReference>
<dbReference type="PROSITE" id="PS50926">
    <property type="entry name" value="TRAM"/>
    <property type="match status" value="1"/>
</dbReference>
<gene>
    <name evidence="1" type="primary">rimO</name>
    <name type="ordered locus">PGN_0263</name>
</gene>
<keyword id="KW-0004">4Fe-4S</keyword>
<keyword id="KW-0963">Cytoplasm</keyword>
<keyword id="KW-0408">Iron</keyword>
<keyword id="KW-0411">Iron-sulfur</keyword>
<keyword id="KW-0479">Metal-binding</keyword>
<keyword id="KW-0949">S-adenosyl-L-methionine</keyword>
<keyword id="KW-0808">Transferase</keyword>
<reference key="1">
    <citation type="journal article" date="2008" name="DNA Res.">
        <title>Determination of the genome sequence of Porphyromonas gingivalis strain ATCC 33277 and genomic comparison with strain W83 revealed extensive genome rearrangements in P. gingivalis.</title>
        <authorList>
            <person name="Naito M."/>
            <person name="Hirakawa H."/>
            <person name="Yamashita A."/>
            <person name="Ohara N."/>
            <person name="Shoji M."/>
            <person name="Yukitake H."/>
            <person name="Nakayama K."/>
            <person name="Toh H."/>
            <person name="Yoshimura F."/>
            <person name="Kuhara S."/>
            <person name="Hattori M."/>
            <person name="Hayashi T."/>
            <person name="Nakayama K."/>
        </authorList>
    </citation>
    <scope>NUCLEOTIDE SEQUENCE [LARGE SCALE GENOMIC DNA]</scope>
    <source>
        <strain>ATCC 33277 / DSM 20709 / CIP 103683 / JCM 12257 / NCTC 11834 / 2561</strain>
    </source>
</reference>
<accession>B2RHD7</accession>
<organism>
    <name type="scientific">Porphyromonas gingivalis (strain ATCC 33277 / DSM 20709 / CIP 103683 / JCM 12257 / NCTC 11834 / 2561)</name>
    <dbReference type="NCBI Taxonomy" id="431947"/>
    <lineage>
        <taxon>Bacteria</taxon>
        <taxon>Pseudomonadati</taxon>
        <taxon>Bacteroidota</taxon>
        <taxon>Bacteroidia</taxon>
        <taxon>Bacteroidales</taxon>
        <taxon>Porphyromonadaceae</taxon>
        <taxon>Porphyromonas</taxon>
    </lineage>
</organism>
<sequence length="434" mass="50046">MRRNRVDVITLGCSKNLVDSEVLMRQFLSNGYTVHHDPASVCGEIVVVNTCGFIGDAQEESVNTILEMVEAKKAGRIGSLYVMGCLSERFREDLKKEIPEVDAYYGKFDWKQLISHLGKSYYAEAENRRKLTTPRHYAYLKISEGCDRSCSYCAIPIITGRHRSRPMEDLVEEVRMLVKHGTREFQLIAQDLTFYGLDLYGANRLAELTARLSDIKGVEWLRLHYAYPAQFPLDLLPVMRERPNVCKYLDMALQHISDPMLRRMRRRITKAETYELIERIRTEVPGIHLRTTLMTGHPGETERDFEELLQFVRDIRFERLGAFTYSHESGTYCDKNYQDDIPESVKQERLGELMAVQERISAAHNEAKIGSRLRVVIDRAEDGFYVGRTEYDSPEVDPEVLIPFVSGQELKPGRFYMAEVTGAEPFDLYARIVD</sequence>
<comment type="function">
    <text evidence="1">Catalyzes the methylthiolation of an aspartic acid residue of ribosomal protein uS12.</text>
</comment>
<comment type="catalytic activity">
    <reaction evidence="1">
        <text>L-aspartate(89)-[ribosomal protein uS12]-hydrogen + (sulfur carrier)-SH + AH2 + 2 S-adenosyl-L-methionine = 3-methylsulfanyl-L-aspartate(89)-[ribosomal protein uS12]-hydrogen + (sulfur carrier)-H + 5'-deoxyadenosine + L-methionine + A + S-adenosyl-L-homocysteine + 2 H(+)</text>
        <dbReference type="Rhea" id="RHEA:37087"/>
        <dbReference type="Rhea" id="RHEA-COMP:10460"/>
        <dbReference type="Rhea" id="RHEA-COMP:10461"/>
        <dbReference type="Rhea" id="RHEA-COMP:14737"/>
        <dbReference type="Rhea" id="RHEA-COMP:14739"/>
        <dbReference type="ChEBI" id="CHEBI:13193"/>
        <dbReference type="ChEBI" id="CHEBI:15378"/>
        <dbReference type="ChEBI" id="CHEBI:17319"/>
        <dbReference type="ChEBI" id="CHEBI:17499"/>
        <dbReference type="ChEBI" id="CHEBI:29917"/>
        <dbReference type="ChEBI" id="CHEBI:29961"/>
        <dbReference type="ChEBI" id="CHEBI:57844"/>
        <dbReference type="ChEBI" id="CHEBI:57856"/>
        <dbReference type="ChEBI" id="CHEBI:59789"/>
        <dbReference type="ChEBI" id="CHEBI:64428"/>
        <dbReference type="ChEBI" id="CHEBI:73599"/>
        <dbReference type="EC" id="2.8.4.4"/>
    </reaction>
</comment>
<comment type="cofactor">
    <cofactor evidence="1">
        <name>[4Fe-4S] cluster</name>
        <dbReference type="ChEBI" id="CHEBI:49883"/>
    </cofactor>
    <text evidence="1">Binds 2 [4Fe-4S] clusters. One cluster is coordinated with 3 cysteines and an exchangeable S-adenosyl-L-methionine.</text>
</comment>
<comment type="subcellular location">
    <subcellularLocation>
        <location evidence="1">Cytoplasm</location>
    </subcellularLocation>
</comment>
<comment type="similarity">
    <text evidence="1">Belongs to the methylthiotransferase family. RimO subfamily.</text>
</comment>
<name>RIMO_PORG3</name>